<comment type="function">
    <text evidence="2 3 4 5 6">Glucose 6-phosphate (Glc6P) transporter (PubMed:15722468). Also transports inorganic phosphate, 3-phosphoglycerate, triose phosphates and, to a leser extent, phosphoenolpyruvate (PubMed:15722468). Responsible for the transport of Glc6P into plastids of heterotrophic tissues where it can be used as a carbon source for starch biosynthesis, as substrate for fatty acid biosynthesis or as substrate for NADPH generation via the oxidative pentose phosphate pathway (OPPP) (PubMed:15722468, PubMed:20712627). Required for dynamic acclimation of photosynthesis and partitioning of Glc6P between the chloroplast and the cytosol (PubMed:19939944, PubMed:25474495). May modulate the sensing of sugar status during early seedling development (PubMed:24489010).</text>
</comment>
<comment type="subcellular location">
    <subcellularLocation>
        <location evidence="8">Plastid</location>
        <location evidence="8">Chloroplast membrane</location>
        <topology evidence="1">Multi-pass membrane protein</topology>
    </subcellularLocation>
</comment>
<comment type="tissue specificity">
    <text evidence="2">Expressed in seeds, flowers, stamens, and rosette leaves, with highest levels found in sepals and senescing leaves.</text>
</comment>
<comment type="induction">
    <text evidence="2 3 7">Induced when grown in high light conditions (PubMed:19939944, PubMed:31316533). Highly expressed in response to Pseudomonas syringae treatment (PubMed:15722468).</text>
</comment>
<comment type="disruption phenotype">
    <text evidence="2 5">No visible phenotype under normal growth conditions (PubMed:15722468). Slight delay in seedling establishement, specifically in the process of cotyledon greening (PubMed:24489010).</text>
</comment>
<comment type="similarity">
    <text evidence="10">Belongs to the TPT transporter family. GPT (TC 2.A.7.9) subfamily.</text>
</comment>
<comment type="sequence caution" evidence="10">
    <conflict type="erroneous gene model prediction">
        <sequence resource="EMBL-CDS" id="AAC28500"/>
    </conflict>
</comment>
<dbReference type="EMBL" id="AC004392">
    <property type="protein sequence ID" value="AAC28500.1"/>
    <property type="status" value="ALT_SEQ"/>
    <property type="molecule type" value="Genomic_DNA"/>
</dbReference>
<dbReference type="EMBL" id="CP002684">
    <property type="protein sequence ID" value="AEE33888.1"/>
    <property type="molecule type" value="Genomic_DNA"/>
</dbReference>
<dbReference type="EMBL" id="AY042874">
    <property type="protein sequence ID" value="AAK68814.1"/>
    <property type="molecule type" value="mRNA"/>
</dbReference>
<dbReference type="EMBL" id="AY081479">
    <property type="protein sequence ID" value="AAM10041.1"/>
    <property type="molecule type" value="mRNA"/>
</dbReference>
<dbReference type="PIR" id="T02126">
    <property type="entry name" value="T02126"/>
</dbReference>
<dbReference type="RefSeq" id="NP_001320539.1">
    <property type="nucleotide sequence ID" value="NM_001334001.1"/>
</dbReference>
<dbReference type="RefSeq" id="NP_564785.1">
    <property type="nucleotide sequence ID" value="NM_104862.4"/>
</dbReference>
<dbReference type="SMR" id="Q94B38"/>
<dbReference type="BioGRID" id="27700">
    <property type="interactions" value="4"/>
</dbReference>
<dbReference type="FunCoup" id="Q94B38">
    <property type="interactions" value="2989"/>
</dbReference>
<dbReference type="IntAct" id="Q94B38">
    <property type="interactions" value="4"/>
</dbReference>
<dbReference type="STRING" id="3702.Q94B38"/>
<dbReference type="TCDB" id="2.A.7.9.6">
    <property type="family name" value="the drug/metabolite transporter (dmt) superfamily"/>
</dbReference>
<dbReference type="MetOSite" id="Q94B38"/>
<dbReference type="PaxDb" id="3702-AT1G61800.1"/>
<dbReference type="ProteomicsDB" id="220642"/>
<dbReference type="EnsemblPlants" id="AT1G61800.1">
    <property type="protein sequence ID" value="AT1G61800.1"/>
    <property type="gene ID" value="AT1G61800"/>
</dbReference>
<dbReference type="GeneID" id="842477"/>
<dbReference type="Gramene" id="AT1G61800.1">
    <property type="protein sequence ID" value="AT1G61800.1"/>
    <property type="gene ID" value="AT1G61800"/>
</dbReference>
<dbReference type="KEGG" id="ath:AT1G61800"/>
<dbReference type="Araport" id="AT1G61800"/>
<dbReference type="TAIR" id="AT1G61800">
    <property type="gene designation" value="GPT2"/>
</dbReference>
<dbReference type="eggNOG" id="KOG1441">
    <property type="taxonomic scope" value="Eukaryota"/>
</dbReference>
<dbReference type="HOGENOM" id="CLU_019048_0_1_1"/>
<dbReference type="InParanoid" id="Q94B38"/>
<dbReference type="OMA" id="HITRSCH"/>
<dbReference type="PhylomeDB" id="Q94B38"/>
<dbReference type="PRO" id="PR:Q94B38"/>
<dbReference type="Proteomes" id="UP000006548">
    <property type="component" value="Chromosome 1"/>
</dbReference>
<dbReference type="ExpressionAtlas" id="Q94B38">
    <property type="expression patterns" value="baseline and differential"/>
</dbReference>
<dbReference type="GO" id="GO:0009507">
    <property type="term" value="C:chloroplast"/>
    <property type="evidence" value="ECO:0000314"/>
    <property type="project" value="TAIR"/>
</dbReference>
<dbReference type="GO" id="GO:0031969">
    <property type="term" value="C:chloroplast membrane"/>
    <property type="evidence" value="ECO:0007669"/>
    <property type="project" value="UniProtKB-SubCell"/>
</dbReference>
<dbReference type="GO" id="GO:0000325">
    <property type="term" value="C:plant-type vacuole"/>
    <property type="evidence" value="ECO:0007005"/>
    <property type="project" value="TAIR"/>
</dbReference>
<dbReference type="GO" id="GO:0015152">
    <property type="term" value="F:glucose-6-phosphate transmembrane transporter activity"/>
    <property type="evidence" value="ECO:0000314"/>
    <property type="project" value="UniProtKB"/>
</dbReference>
<dbReference type="GO" id="GO:0005315">
    <property type="term" value="F:phosphate transmembrane transporter activity"/>
    <property type="evidence" value="ECO:0000314"/>
    <property type="project" value="UniProtKB"/>
</dbReference>
<dbReference type="GO" id="GO:0015120">
    <property type="term" value="F:phosphoglycerate transmembrane transporter activity"/>
    <property type="evidence" value="ECO:0000314"/>
    <property type="project" value="UniProtKB"/>
</dbReference>
<dbReference type="GO" id="GO:0071917">
    <property type="term" value="F:triose-phosphate transmembrane transporter activity"/>
    <property type="evidence" value="ECO:0000314"/>
    <property type="project" value="UniProtKB"/>
</dbReference>
<dbReference type="GO" id="GO:0015760">
    <property type="term" value="P:glucose-6-phosphate transport"/>
    <property type="evidence" value="ECO:0000314"/>
    <property type="project" value="UniProtKB"/>
</dbReference>
<dbReference type="GO" id="GO:0015714">
    <property type="term" value="P:phosphoenolpyruvate transport"/>
    <property type="evidence" value="ECO:0000314"/>
    <property type="project" value="UniProtKB"/>
</dbReference>
<dbReference type="GO" id="GO:0015713">
    <property type="term" value="P:phosphoglycerate transmembrane transport"/>
    <property type="evidence" value="ECO:0000314"/>
    <property type="project" value="UniProtKB"/>
</dbReference>
<dbReference type="GO" id="GO:0015979">
    <property type="term" value="P:photosynthesis"/>
    <property type="evidence" value="ECO:0000315"/>
    <property type="project" value="TAIR"/>
</dbReference>
<dbReference type="GO" id="GO:0009643">
    <property type="term" value="P:photosynthetic acclimation"/>
    <property type="evidence" value="ECO:0000315"/>
    <property type="project" value="UniProtKB"/>
</dbReference>
<dbReference type="GO" id="GO:0010109">
    <property type="term" value="P:regulation of photosynthesis"/>
    <property type="evidence" value="ECO:0000315"/>
    <property type="project" value="TAIR"/>
</dbReference>
<dbReference type="GO" id="GO:0009749">
    <property type="term" value="P:response to glucose"/>
    <property type="evidence" value="ECO:0000270"/>
    <property type="project" value="TAIR"/>
</dbReference>
<dbReference type="GO" id="GO:0009624">
    <property type="term" value="P:response to nematode"/>
    <property type="evidence" value="ECO:0000270"/>
    <property type="project" value="TAIR"/>
</dbReference>
<dbReference type="GO" id="GO:0009744">
    <property type="term" value="P:response to sucrose"/>
    <property type="evidence" value="ECO:0000270"/>
    <property type="project" value="TAIR"/>
</dbReference>
<dbReference type="GO" id="GO:0035436">
    <property type="term" value="P:triose phosphate transmembrane transport"/>
    <property type="evidence" value="ECO:0000314"/>
    <property type="project" value="UniProtKB"/>
</dbReference>
<dbReference type="InterPro" id="IPR004853">
    <property type="entry name" value="Sugar_P_trans_dom"/>
</dbReference>
<dbReference type="InterPro" id="IPR004696">
    <property type="entry name" value="Tpt_PEP_transl"/>
</dbReference>
<dbReference type="InterPro" id="IPR050186">
    <property type="entry name" value="TPT_transporter"/>
</dbReference>
<dbReference type="NCBIfam" id="TIGR00817">
    <property type="entry name" value="tpt"/>
    <property type="match status" value="1"/>
</dbReference>
<dbReference type="PANTHER" id="PTHR11132">
    <property type="entry name" value="SOLUTE CARRIER FAMILY 35"/>
    <property type="match status" value="1"/>
</dbReference>
<dbReference type="Pfam" id="PF03151">
    <property type="entry name" value="TPT"/>
    <property type="match status" value="1"/>
</dbReference>
<dbReference type="SUPFAM" id="SSF103481">
    <property type="entry name" value="Multidrug resistance efflux transporter EmrE"/>
    <property type="match status" value="2"/>
</dbReference>
<keyword id="KW-0150">Chloroplast</keyword>
<keyword id="KW-0472">Membrane</keyword>
<keyword id="KW-0934">Plastid</keyword>
<keyword id="KW-1185">Reference proteome</keyword>
<keyword id="KW-0762">Sugar transport</keyword>
<keyword id="KW-0809">Transit peptide</keyword>
<keyword id="KW-0812">Transmembrane</keyword>
<keyword id="KW-1133">Transmembrane helix</keyword>
<keyword id="KW-0813">Transport</keyword>
<proteinExistence type="evidence at transcript level"/>
<feature type="transit peptide" description="Chloroplast" evidence="1">
    <location>
        <begin position="1"/>
        <end position="68"/>
    </location>
</feature>
<feature type="chain" id="PRO_0000035712" description="Glucose-6-phosphate/phosphate translocator 2, chloroplastic">
    <location>
        <begin position="69"/>
        <end position="388"/>
    </location>
</feature>
<feature type="transmembrane region" description="Helical" evidence="1">
    <location>
        <begin position="95"/>
        <end position="115"/>
    </location>
</feature>
<feature type="transmembrane region" description="Helical" evidence="1">
    <location>
        <begin position="122"/>
        <end position="142"/>
    </location>
</feature>
<feature type="transmembrane region" description="Helical" evidence="1">
    <location>
        <begin position="158"/>
        <end position="178"/>
    </location>
</feature>
<feature type="transmembrane region" description="Helical" evidence="1">
    <location>
        <begin position="211"/>
        <end position="231"/>
    </location>
</feature>
<feature type="transmembrane region" description="Helical" evidence="1">
    <location>
        <begin position="233"/>
        <end position="253"/>
    </location>
</feature>
<feature type="transmembrane region" description="Helical" evidence="1">
    <location>
        <begin position="281"/>
        <end position="301"/>
    </location>
</feature>
<feature type="transmembrane region" description="Helical" evidence="1">
    <location>
        <begin position="305"/>
        <end position="325"/>
    </location>
</feature>
<feature type="transmembrane region" description="Helical" evidence="1">
    <location>
        <begin position="358"/>
        <end position="378"/>
    </location>
</feature>
<feature type="domain" description="EamA">
    <location>
        <begin position="113"/>
        <end position="231"/>
    </location>
</feature>
<feature type="sequence conflict" description="In Ref. 3; AAK68814/AAM10041." evidence="10" ref="3">
    <original>G</original>
    <variation>V</variation>
    <location>
        <position position="293"/>
    </location>
</feature>
<organism>
    <name type="scientific">Arabidopsis thaliana</name>
    <name type="common">Mouse-ear cress</name>
    <dbReference type="NCBI Taxonomy" id="3702"/>
    <lineage>
        <taxon>Eukaryota</taxon>
        <taxon>Viridiplantae</taxon>
        <taxon>Streptophyta</taxon>
        <taxon>Embryophyta</taxon>
        <taxon>Tracheophyta</taxon>
        <taxon>Spermatophyta</taxon>
        <taxon>Magnoliopsida</taxon>
        <taxon>eudicotyledons</taxon>
        <taxon>Gunneridae</taxon>
        <taxon>Pentapetalae</taxon>
        <taxon>rosids</taxon>
        <taxon>malvids</taxon>
        <taxon>Brassicales</taxon>
        <taxon>Brassicaceae</taxon>
        <taxon>Camelineae</taxon>
        <taxon>Arabidopsis</taxon>
    </lineage>
</organism>
<protein>
    <recommendedName>
        <fullName evidence="9">Glucose-6-phosphate/phosphate translocator 2, chloroplastic</fullName>
        <shortName evidence="9">AtGPT2</shortName>
    </recommendedName>
</protein>
<name>GPT2_ARATH</name>
<accession>Q94B38</accession>
<accession>O80688</accession>
<reference key="1">
    <citation type="journal article" date="2000" name="Nature">
        <title>Sequence and analysis of chromosome 1 of the plant Arabidopsis thaliana.</title>
        <authorList>
            <person name="Theologis A."/>
            <person name="Ecker J.R."/>
            <person name="Palm C.J."/>
            <person name="Federspiel N.A."/>
            <person name="Kaul S."/>
            <person name="White O."/>
            <person name="Alonso J."/>
            <person name="Altafi H."/>
            <person name="Araujo R."/>
            <person name="Bowman C.L."/>
            <person name="Brooks S.Y."/>
            <person name="Buehler E."/>
            <person name="Chan A."/>
            <person name="Chao Q."/>
            <person name="Chen H."/>
            <person name="Cheuk R.F."/>
            <person name="Chin C.W."/>
            <person name="Chung M.K."/>
            <person name="Conn L."/>
            <person name="Conway A.B."/>
            <person name="Conway A.R."/>
            <person name="Creasy T.H."/>
            <person name="Dewar K."/>
            <person name="Dunn P."/>
            <person name="Etgu P."/>
            <person name="Feldblyum T.V."/>
            <person name="Feng J.-D."/>
            <person name="Fong B."/>
            <person name="Fujii C.Y."/>
            <person name="Gill J.E."/>
            <person name="Goldsmith A.D."/>
            <person name="Haas B."/>
            <person name="Hansen N.F."/>
            <person name="Hughes B."/>
            <person name="Huizar L."/>
            <person name="Hunter J.L."/>
            <person name="Jenkins J."/>
            <person name="Johnson-Hopson C."/>
            <person name="Khan S."/>
            <person name="Khaykin E."/>
            <person name="Kim C.J."/>
            <person name="Koo H.L."/>
            <person name="Kremenetskaia I."/>
            <person name="Kurtz D.B."/>
            <person name="Kwan A."/>
            <person name="Lam B."/>
            <person name="Langin-Hooper S."/>
            <person name="Lee A."/>
            <person name="Lee J.M."/>
            <person name="Lenz C.A."/>
            <person name="Li J.H."/>
            <person name="Li Y.-P."/>
            <person name="Lin X."/>
            <person name="Liu S.X."/>
            <person name="Liu Z.A."/>
            <person name="Luros J.S."/>
            <person name="Maiti R."/>
            <person name="Marziali A."/>
            <person name="Militscher J."/>
            <person name="Miranda M."/>
            <person name="Nguyen M."/>
            <person name="Nierman W.C."/>
            <person name="Osborne B.I."/>
            <person name="Pai G."/>
            <person name="Peterson J."/>
            <person name="Pham P.K."/>
            <person name="Rizzo M."/>
            <person name="Rooney T."/>
            <person name="Rowley D."/>
            <person name="Sakano H."/>
            <person name="Salzberg S.L."/>
            <person name="Schwartz J.R."/>
            <person name="Shinn P."/>
            <person name="Southwick A.M."/>
            <person name="Sun H."/>
            <person name="Tallon L.J."/>
            <person name="Tambunga G."/>
            <person name="Toriumi M.J."/>
            <person name="Town C.D."/>
            <person name="Utterback T."/>
            <person name="Van Aken S."/>
            <person name="Vaysberg M."/>
            <person name="Vysotskaia V.S."/>
            <person name="Walker M."/>
            <person name="Wu D."/>
            <person name="Yu G."/>
            <person name="Fraser C.M."/>
            <person name="Venter J.C."/>
            <person name="Davis R.W."/>
        </authorList>
    </citation>
    <scope>NUCLEOTIDE SEQUENCE [LARGE SCALE GENOMIC DNA]</scope>
    <source>
        <strain>cv. Columbia</strain>
    </source>
</reference>
<reference key="2">
    <citation type="journal article" date="2017" name="Plant J.">
        <title>Araport11: a complete reannotation of the Arabidopsis thaliana reference genome.</title>
        <authorList>
            <person name="Cheng C.Y."/>
            <person name="Krishnakumar V."/>
            <person name="Chan A.P."/>
            <person name="Thibaud-Nissen F."/>
            <person name="Schobel S."/>
            <person name="Town C.D."/>
        </authorList>
    </citation>
    <scope>GENOME REANNOTATION</scope>
    <source>
        <strain>cv. Columbia</strain>
    </source>
</reference>
<reference key="3">
    <citation type="journal article" date="2003" name="Science">
        <title>Empirical analysis of transcriptional activity in the Arabidopsis genome.</title>
        <authorList>
            <person name="Yamada K."/>
            <person name="Lim J."/>
            <person name="Dale J.M."/>
            <person name="Chen H."/>
            <person name="Shinn P."/>
            <person name="Palm C.J."/>
            <person name="Southwick A.M."/>
            <person name="Wu H.C."/>
            <person name="Kim C.J."/>
            <person name="Nguyen M."/>
            <person name="Pham P.K."/>
            <person name="Cheuk R.F."/>
            <person name="Karlin-Newmann G."/>
            <person name="Liu S.X."/>
            <person name="Lam B."/>
            <person name="Sakano H."/>
            <person name="Wu T."/>
            <person name="Yu G."/>
            <person name="Miranda M."/>
            <person name="Quach H.L."/>
            <person name="Tripp M."/>
            <person name="Chang C.H."/>
            <person name="Lee J.M."/>
            <person name="Toriumi M.J."/>
            <person name="Chan M.M."/>
            <person name="Tang C.C."/>
            <person name="Onodera C.S."/>
            <person name="Deng J.M."/>
            <person name="Akiyama K."/>
            <person name="Ansari Y."/>
            <person name="Arakawa T."/>
            <person name="Banh J."/>
            <person name="Banno F."/>
            <person name="Bowser L."/>
            <person name="Brooks S.Y."/>
            <person name="Carninci P."/>
            <person name="Chao Q."/>
            <person name="Choy N."/>
            <person name="Enju A."/>
            <person name="Goldsmith A.D."/>
            <person name="Gurjal M."/>
            <person name="Hansen N.F."/>
            <person name="Hayashizaki Y."/>
            <person name="Johnson-Hopson C."/>
            <person name="Hsuan V.W."/>
            <person name="Iida K."/>
            <person name="Karnes M."/>
            <person name="Khan S."/>
            <person name="Koesema E."/>
            <person name="Ishida J."/>
            <person name="Jiang P.X."/>
            <person name="Jones T."/>
            <person name="Kawai J."/>
            <person name="Kamiya A."/>
            <person name="Meyers C."/>
            <person name="Nakajima M."/>
            <person name="Narusaka M."/>
            <person name="Seki M."/>
            <person name="Sakurai T."/>
            <person name="Satou M."/>
            <person name="Tamse R."/>
            <person name="Vaysberg M."/>
            <person name="Wallender E.K."/>
            <person name="Wong C."/>
            <person name="Yamamura Y."/>
            <person name="Yuan S."/>
            <person name="Shinozaki K."/>
            <person name="Davis R.W."/>
            <person name="Theologis A."/>
            <person name="Ecker J.R."/>
        </authorList>
    </citation>
    <scope>NUCLEOTIDE SEQUENCE [LARGE SCALE MRNA]</scope>
    <source>
        <strain>cv. Columbia</strain>
    </source>
</reference>
<reference key="4">
    <citation type="journal article" date="2005" name="Plant Cell">
        <title>The Arabidopsis plastidic glucose 6-phosphate/phosphate translocator GPT1 is essential for pollen maturation and embryo sac development.</title>
        <authorList>
            <person name="Niewiadomski P."/>
            <person name="Knappe S."/>
            <person name="Geimer S."/>
            <person name="Fischer K."/>
            <person name="Schulz B."/>
            <person name="Unte U.S."/>
            <person name="Rosso M.G."/>
            <person name="Ache P."/>
            <person name="Fluegge U.-I."/>
            <person name="Schneider A."/>
        </authorList>
    </citation>
    <scope>FUNCTION</scope>
    <scope>TISSUE SPECIFICITY</scope>
    <scope>INDUCTION</scope>
    <scope>DISRUPTION PHENOTYPE</scope>
</reference>
<reference key="5">
    <citation type="journal article" date="2010" name="Plant Physiol.">
        <title>Dynamic acclimation of photosynthesis increases plant fitness in changing environments.</title>
        <authorList>
            <person name="Athanasiou K."/>
            <person name="Dyson B.C."/>
            <person name="Webster R.E."/>
            <person name="Johnson G.N."/>
        </authorList>
    </citation>
    <scope>FUNCTION</scope>
    <scope>INDUCTION</scope>
</reference>
<reference key="6">
    <citation type="journal article" date="2010" name="Plant Biol.">
        <title>The role of plastidial glucose-6-phosphate/phosphate translocators in vegetative tissues of Arabidopsis thaliana mutants impaired in starch biosynthesis.</title>
        <authorList>
            <person name="Kunz H.H."/>
            <person name="Haeusler R.E."/>
            <person name="Fettke J."/>
            <person name="Herbst K."/>
            <person name="Niewiadomski P."/>
            <person name="Gierth M."/>
            <person name="Bell K."/>
            <person name="Steup M."/>
            <person name="Fluegge U.I."/>
            <person name="Schneider A."/>
        </authorList>
    </citation>
    <scope>FUNCTION</scope>
</reference>
<reference key="7">
    <citation type="journal article" date="2014" name="Ann. Bot.">
        <title>GPT2: a glucose 6-phosphate/phosphate translocator with a novel role in the regulation of sugar signalling during seedling development.</title>
        <authorList>
            <person name="Dyson B.C."/>
            <person name="Webster R.E."/>
            <person name="Johnson G.N."/>
        </authorList>
    </citation>
    <scope>FUNCTION</scope>
    <scope>DISRUPTION PHENOTYPE</scope>
</reference>
<reference key="8">
    <citation type="journal article" date="2014" name="Proc. Natl. Acad. Sci. U.S.A.">
        <title>The Golgi localized bifunctional UDP-rhamnose/UDP-galactose transporter family of Arabidopsis.</title>
        <authorList>
            <person name="Rautengarten C."/>
            <person name="Ebert B."/>
            <person name="Moreno I."/>
            <person name="Temple H."/>
            <person name="Herter T."/>
            <person name="Link B."/>
            <person name="Donas-Cofre D."/>
            <person name="Moreno A."/>
            <person name="Saez-Aguayo S."/>
            <person name="Blanco F."/>
            <person name="Mortimer J.C."/>
            <person name="Schultink A."/>
            <person name="Reiter W.D."/>
            <person name="Dupree P."/>
            <person name="Pauly M."/>
            <person name="Heazlewood J.L."/>
            <person name="Scheller H.V."/>
            <person name="Orellana A."/>
        </authorList>
    </citation>
    <scope>GENE FAMILY</scope>
</reference>
<reference key="9">
    <citation type="journal article" date="2015" name="Plant Cell Environ.">
        <title>Acclimation of metabolism to light in Arabidopsis thaliana: the glucose 6-phosphate/phosphate translocator GPT2 directs metabolic acclimation.</title>
        <authorList>
            <person name="Dyson B.C."/>
            <person name="Allwood J.W."/>
            <person name="Feil R."/>
            <person name="Xu Y."/>
            <person name="Miller M."/>
            <person name="Bowsher C.G."/>
            <person name="Goodacre R."/>
            <person name="Lunn J.E."/>
            <person name="Johnson G.N."/>
        </authorList>
    </citation>
    <scope>FUNCTION</scope>
</reference>
<reference key="10">
    <citation type="journal article" date="2019" name="Front. Plant Sci.">
        <title>Transcriptional regulation of the glucose-6-phosphate/phosphate translocator 2 is related to carbon exchange across the chloroplast envelope.</title>
        <authorList>
            <person name="Weise S.E."/>
            <person name="Liu T."/>
            <person name="Childs K.L."/>
            <person name="Preiser A.L."/>
            <person name="Katulski H.M."/>
            <person name="Perrin-Porzondek C."/>
            <person name="Sharkey T.D."/>
        </authorList>
    </citation>
    <scope>INDUCTION</scope>
</reference>
<reference key="11">
    <citation type="journal article" date="2020" name="Plant Cell">
        <title>The Arabidopsis plastidial glucose-6-phosphate transporter GPT1 is dually targeted to peroxisomes via the endoplasmic reticulum.</title>
        <authorList>
            <person name="Baune M.C."/>
            <person name="Lansing H."/>
            <person name="Fischer K."/>
            <person name="Meyer T."/>
            <person name="Charton L."/>
            <person name="Linka N."/>
            <person name="von Schaewen A."/>
        </authorList>
    </citation>
    <scope>SUBCELLULAR LOCATION</scope>
</reference>
<gene>
    <name evidence="9" type="primary">GPT2</name>
    <name evidence="11" type="ordered locus">At1g61800</name>
    <name evidence="12" type="ORF">F8K4.1</name>
</gene>
<evidence type="ECO:0000255" key="1"/>
<evidence type="ECO:0000269" key="2">
    <source>
    </source>
</evidence>
<evidence type="ECO:0000269" key="3">
    <source>
    </source>
</evidence>
<evidence type="ECO:0000269" key="4">
    <source>
    </source>
</evidence>
<evidence type="ECO:0000269" key="5">
    <source>
    </source>
</evidence>
<evidence type="ECO:0000269" key="6">
    <source>
    </source>
</evidence>
<evidence type="ECO:0000269" key="7">
    <source>
    </source>
</evidence>
<evidence type="ECO:0000269" key="8">
    <source>
    </source>
</evidence>
<evidence type="ECO:0000303" key="9">
    <source>
    </source>
</evidence>
<evidence type="ECO:0000305" key="10"/>
<evidence type="ECO:0000312" key="11">
    <source>
        <dbReference type="Araport" id="AT1G61800"/>
    </source>
</evidence>
<evidence type="ECO:0000312" key="12">
    <source>
        <dbReference type="EMBL" id="AAC28500.1"/>
    </source>
</evidence>
<sequence length="388" mass="42754">MLSSIKPSSSSFSTAISGSVRRSIPTKLKFSPLLIIKNCHNQSFNANVVSHQKPLHISSASNFKREVKVEAYEADRSRPLDINIELPDEQSAQKLKIGIYFATWWALNVVFNIYNKKVLNAFPYPWLTSTLSLACGSLMMLVSWATRIADAPKTDLEFWKTLFPVAVAHTIGHVAATVSMSKVAVSFTHIIKSGEPAFSVLVSRFFMGETFPLPVYLSLLPIIGGCALAAITELNFNITGFMGAMISNLAFVFRNIFSKKGMKGKSVSGMNYYACLSMMSLVILTPFSIAVEGPQMWAAGWQNAVSQVGPNFVWWVVAQSVFYHLYNQVSYMSLDQISPLTFSIGNTMKRISVIVASIIIFHTPIQPVNALGAAIAIFGTFLYSQAKQ</sequence>